<comment type="function">
    <text evidence="1">Involved in iron-sulfur (Fe-S) cluster assembly. May act as a regulator of Fe-S biogenesis.</text>
</comment>
<comment type="similarity">
    <text evidence="1">Belongs to the frataxin family.</text>
</comment>
<dbReference type="EMBL" id="CP000653">
    <property type="protein sequence ID" value="ABP62640.1"/>
    <property type="molecule type" value="Genomic_DNA"/>
</dbReference>
<dbReference type="RefSeq" id="WP_015960945.1">
    <property type="nucleotide sequence ID" value="NC_009436.1"/>
</dbReference>
<dbReference type="SMR" id="A4WG10"/>
<dbReference type="STRING" id="399742.Ent638_3985"/>
<dbReference type="KEGG" id="ent:Ent638_3985"/>
<dbReference type="eggNOG" id="COG1965">
    <property type="taxonomic scope" value="Bacteria"/>
</dbReference>
<dbReference type="HOGENOM" id="CLU_080880_3_0_6"/>
<dbReference type="OrthoDB" id="285675at2"/>
<dbReference type="Proteomes" id="UP000000230">
    <property type="component" value="Chromosome"/>
</dbReference>
<dbReference type="GO" id="GO:0005829">
    <property type="term" value="C:cytosol"/>
    <property type="evidence" value="ECO:0007669"/>
    <property type="project" value="TreeGrafter"/>
</dbReference>
<dbReference type="GO" id="GO:0008199">
    <property type="term" value="F:ferric iron binding"/>
    <property type="evidence" value="ECO:0007669"/>
    <property type="project" value="InterPro"/>
</dbReference>
<dbReference type="GO" id="GO:0008198">
    <property type="term" value="F:ferrous iron binding"/>
    <property type="evidence" value="ECO:0007669"/>
    <property type="project" value="TreeGrafter"/>
</dbReference>
<dbReference type="GO" id="GO:0016226">
    <property type="term" value="P:iron-sulfur cluster assembly"/>
    <property type="evidence" value="ECO:0007669"/>
    <property type="project" value="UniProtKB-UniRule"/>
</dbReference>
<dbReference type="CDD" id="cd00503">
    <property type="entry name" value="Frataxin"/>
    <property type="match status" value="1"/>
</dbReference>
<dbReference type="FunFam" id="3.30.920.10:FF:000001">
    <property type="entry name" value="Iron-sulfur cluster assembly protein CyaY"/>
    <property type="match status" value="1"/>
</dbReference>
<dbReference type="Gene3D" id="3.30.920.10">
    <property type="entry name" value="Frataxin/CyaY"/>
    <property type="match status" value="1"/>
</dbReference>
<dbReference type="HAMAP" id="MF_00142">
    <property type="entry name" value="CyaY"/>
    <property type="match status" value="1"/>
</dbReference>
<dbReference type="InterPro" id="IPR047584">
    <property type="entry name" value="CyaY"/>
</dbReference>
<dbReference type="InterPro" id="IPR002908">
    <property type="entry name" value="Frataxin/CyaY"/>
</dbReference>
<dbReference type="InterPro" id="IPR036524">
    <property type="entry name" value="Frataxin/CyaY_sf"/>
</dbReference>
<dbReference type="InterPro" id="IPR020895">
    <property type="entry name" value="Frataxin_CS"/>
</dbReference>
<dbReference type="NCBIfam" id="TIGR03421">
    <property type="entry name" value="FeS_CyaY"/>
    <property type="match status" value="1"/>
</dbReference>
<dbReference type="PANTHER" id="PTHR16821">
    <property type="entry name" value="FRATAXIN"/>
    <property type="match status" value="1"/>
</dbReference>
<dbReference type="PANTHER" id="PTHR16821:SF2">
    <property type="entry name" value="FRATAXIN, MITOCHONDRIAL"/>
    <property type="match status" value="1"/>
</dbReference>
<dbReference type="Pfam" id="PF01491">
    <property type="entry name" value="Frataxin_Cyay"/>
    <property type="match status" value="1"/>
</dbReference>
<dbReference type="SMART" id="SM01219">
    <property type="entry name" value="Frataxin_Cyay"/>
    <property type="match status" value="1"/>
</dbReference>
<dbReference type="SUPFAM" id="SSF55387">
    <property type="entry name" value="Frataxin/Nqo15-like"/>
    <property type="match status" value="1"/>
</dbReference>
<dbReference type="PROSITE" id="PS01344">
    <property type="entry name" value="FRATAXIN_1"/>
    <property type="match status" value="1"/>
</dbReference>
<dbReference type="PROSITE" id="PS50810">
    <property type="entry name" value="FRATAXIN_2"/>
    <property type="match status" value="1"/>
</dbReference>
<gene>
    <name evidence="1" type="primary">cyaY</name>
    <name type="ordered locus">Ent638_3985</name>
</gene>
<keyword id="KW-0408">Iron</keyword>
<keyword id="KW-0479">Metal-binding</keyword>
<accession>A4WG10</accession>
<name>CYAY_ENT38</name>
<protein>
    <recommendedName>
        <fullName evidence="1">Iron-sulfur cluster assembly protein CyaY</fullName>
    </recommendedName>
</protein>
<feature type="chain" id="PRO_1000057932" description="Iron-sulfur cluster assembly protein CyaY">
    <location>
        <begin position="1"/>
        <end position="107"/>
    </location>
</feature>
<proteinExistence type="inferred from homology"/>
<evidence type="ECO:0000255" key="1">
    <source>
        <dbReference type="HAMAP-Rule" id="MF_00142"/>
    </source>
</evidence>
<sequence>MNDSEFHRLADNLWQTIEARLDDWDGDSDIDCEINGGVLTLSFENGSKIIINRQEPLHQVWLATKQGGYHFNLKGDDWICDRSGEMFWDLLEQAATQQAGEEISFRG</sequence>
<reference key="1">
    <citation type="journal article" date="2010" name="PLoS Genet.">
        <title>Genome sequence of the plant growth promoting endophytic bacterium Enterobacter sp. 638.</title>
        <authorList>
            <person name="Taghavi S."/>
            <person name="van der Lelie D."/>
            <person name="Hoffman A."/>
            <person name="Zhang Y.B."/>
            <person name="Walla M.D."/>
            <person name="Vangronsveld J."/>
            <person name="Newman L."/>
            <person name="Monchy S."/>
        </authorList>
    </citation>
    <scope>NUCLEOTIDE SEQUENCE [LARGE SCALE GENOMIC DNA]</scope>
    <source>
        <strain>638</strain>
    </source>
</reference>
<organism>
    <name type="scientific">Enterobacter sp. (strain 638)</name>
    <dbReference type="NCBI Taxonomy" id="399742"/>
    <lineage>
        <taxon>Bacteria</taxon>
        <taxon>Pseudomonadati</taxon>
        <taxon>Pseudomonadota</taxon>
        <taxon>Gammaproteobacteria</taxon>
        <taxon>Enterobacterales</taxon>
        <taxon>Enterobacteriaceae</taxon>
        <taxon>Enterobacter</taxon>
    </lineage>
</organism>